<feature type="chain" id="PRO_0000072366" description="Synaptonemal complex protein 2">
    <location>
        <begin position="1"/>
        <end position="1530"/>
    </location>
</feature>
<feature type="region of interest" description="Disordered" evidence="3">
    <location>
        <begin position="439"/>
        <end position="480"/>
    </location>
</feature>
<feature type="region of interest" description="Disordered" evidence="3">
    <location>
        <begin position="496"/>
        <end position="555"/>
    </location>
</feature>
<feature type="region of interest" description="Disordered" evidence="3">
    <location>
        <begin position="653"/>
        <end position="676"/>
    </location>
</feature>
<feature type="region of interest" description="Disordered" evidence="3">
    <location>
        <begin position="693"/>
        <end position="717"/>
    </location>
</feature>
<feature type="region of interest" description="Disordered" evidence="3">
    <location>
        <begin position="755"/>
        <end position="795"/>
    </location>
</feature>
<feature type="region of interest" description="Disordered" evidence="3">
    <location>
        <begin position="962"/>
        <end position="1003"/>
    </location>
</feature>
<feature type="compositionally biased region" description="Basic and acidic residues" evidence="3">
    <location>
        <begin position="439"/>
        <end position="461"/>
    </location>
</feature>
<feature type="compositionally biased region" description="Polar residues" evidence="3">
    <location>
        <begin position="515"/>
        <end position="530"/>
    </location>
</feature>
<feature type="compositionally biased region" description="Basic and acidic residues" evidence="3">
    <location>
        <begin position="542"/>
        <end position="555"/>
    </location>
</feature>
<feature type="compositionally biased region" description="Polar residues" evidence="3">
    <location>
        <begin position="695"/>
        <end position="713"/>
    </location>
</feature>
<feature type="compositionally biased region" description="Polar residues" evidence="3">
    <location>
        <begin position="755"/>
        <end position="764"/>
    </location>
</feature>
<feature type="compositionally biased region" description="Basic residues" evidence="3">
    <location>
        <begin position="970"/>
        <end position="979"/>
    </location>
</feature>
<feature type="compositionally biased region" description="Polar residues" evidence="3">
    <location>
        <begin position="988"/>
        <end position="998"/>
    </location>
</feature>
<feature type="modified residue" description="Phosphoserine" evidence="2">
    <location>
        <position position="457"/>
    </location>
</feature>
<feature type="modified residue" description="Phosphoserine" evidence="2">
    <location>
        <position position="465"/>
    </location>
</feature>
<feature type="modified residue" description="Phosphothreonine" evidence="2">
    <location>
        <position position="471"/>
    </location>
</feature>
<feature type="modified residue" description="Phosphoserine" evidence="2">
    <location>
        <position position="494"/>
    </location>
</feature>
<feature type="modified residue" description="Phosphoserine" evidence="2">
    <location>
        <position position="519"/>
    </location>
</feature>
<feature type="modified residue" description="Phosphoserine" evidence="2">
    <location>
        <position position="529"/>
    </location>
</feature>
<feature type="modified residue" description="Phosphoserine" evidence="2">
    <location>
        <position position="538"/>
    </location>
</feature>
<feature type="modified residue" description="Phosphothreonine" evidence="2">
    <location>
        <position position="619"/>
    </location>
</feature>
<feature type="modified residue" description="Phosphoserine" evidence="1">
    <location>
        <position position="660"/>
    </location>
</feature>
<feature type="modified residue" description="Phosphoserine" evidence="2">
    <location>
        <position position="664"/>
    </location>
</feature>
<feature type="modified residue" description="Phosphoserine" evidence="2">
    <location>
        <position position="936"/>
    </location>
</feature>
<feature type="modified residue" description="Phosphothreonine" evidence="2">
    <location>
        <position position="938"/>
    </location>
</feature>
<feature type="modified residue" description="Phosphoserine" evidence="2">
    <location>
        <position position="1136"/>
    </location>
</feature>
<feature type="modified residue" description="Phosphoserine" evidence="2">
    <location>
        <position position="1138"/>
    </location>
</feature>
<feature type="modified residue" description="Phosphoserine" evidence="2">
    <location>
        <position position="1145"/>
    </location>
</feature>
<feature type="modified residue" description="Phosphoserine" evidence="2">
    <location>
        <position position="1161"/>
    </location>
</feature>
<feature type="modified residue" description="Phosphoserine" evidence="2">
    <location>
        <position position="1177"/>
    </location>
</feature>
<feature type="modified residue" description="Phosphothreonine" evidence="2">
    <location>
        <position position="1189"/>
    </location>
</feature>
<feature type="modified residue" description="Phosphoserine" evidence="2">
    <location>
        <position position="1204"/>
    </location>
</feature>
<feature type="modified residue" description="Phosphoserine" evidence="1">
    <location>
        <position position="1234"/>
    </location>
</feature>
<feature type="modified residue" description="Phosphoserine" evidence="1">
    <location>
        <position position="1253"/>
    </location>
</feature>
<feature type="modified residue" description="Phosphoserine" evidence="2">
    <location>
        <position position="1295"/>
    </location>
</feature>
<feature type="modified residue" description="Phosphoserine" evidence="2">
    <location>
        <position position="1297"/>
    </location>
</feature>
<feature type="modified residue" description="Phosphothreonine" evidence="2">
    <location>
        <position position="1339"/>
    </location>
</feature>
<feature type="sequence variant" id="VAR_054059" description="In dbSNP:rs13039338.">
    <original>T</original>
    <variation>K</variation>
    <location>
        <position position="353"/>
    </location>
</feature>
<feature type="sequence variant" id="VAR_014115" description="In dbSNP:rs1359836.">
    <original>P</original>
    <variation>L</variation>
    <location>
        <position position="523"/>
    </location>
</feature>
<feature type="sequence variant" id="VAR_054060" description="In dbSNP:rs6071006.">
    <original>T</original>
    <variation>I</variation>
    <location>
        <position position="751"/>
    </location>
</feature>
<feature type="sequence variant" id="VAR_054061" description="In dbSNP:rs6128714.">
    <original>V</original>
    <variation>A</variation>
    <location>
        <position position="1155"/>
    </location>
</feature>
<feature type="sequence conflict" description="In Ref. 1; CAA70171." evidence="5" ref="1">
    <original>G</original>
    <variation>A</variation>
    <location>
        <position position="218"/>
    </location>
</feature>
<feature type="sequence conflict" description="In Ref. 1; CAA70171." evidence="5" ref="1">
    <original>K</original>
    <variation>R</variation>
    <location>
        <position position="691"/>
    </location>
</feature>
<feature type="sequence conflict" description="In Ref. 4." evidence="5" ref="4">
    <original>GKEF</original>
    <variation>KKKK</variation>
    <location>
        <begin position="794"/>
        <end position="797"/>
    </location>
</feature>
<feature type="sequence conflict" description="In Ref. 1; CAA70171." evidence="5" ref="1">
    <original>I</original>
    <variation>T</variation>
    <location>
        <position position="1179"/>
    </location>
</feature>
<feature type="sequence conflict" description="In Ref. 1; CAA70171." evidence="5" ref="1">
    <original>P</original>
    <variation>A</variation>
    <location>
        <position position="1186"/>
    </location>
</feature>
<feature type="sequence conflict" description="In Ref. 1; CAA70171." evidence="5" ref="1">
    <original>S</original>
    <variation>R</variation>
    <location>
        <position position="1222"/>
    </location>
</feature>
<reference key="1">
    <citation type="journal article" date="1999" name="Mamm. Genome">
        <title>Isolation and characterization of the human SCP2 cDNA and chromosomal localization of the gene.</title>
        <authorList>
            <person name="Schalk J.A."/>
            <person name="Offenberg H.H."/>
            <person name="Peters E."/>
            <person name="Groot N.P."/>
            <person name="Hoovers J.M.N."/>
            <person name="Heyting C."/>
        </authorList>
    </citation>
    <scope>NUCLEOTIDE SEQUENCE [MRNA]</scope>
    <source>
        <tissue>Testis</tissue>
    </source>
</reference>
<reference key="2">
    <citation type="journal article" date="2001" name="Nature">
        <title>The DNA sequence and comparative analysis of human chromosome 20.</title>
        <authorList>
            <person name="Deloukas P."/>
            <person name="Matthews L.H."/>
            <person name="Ashurst J.L."/>
            <person name="Burton J."/>
            <person name="Gilbert J.G.R."/>
            <person name="Jones M."/>
            <person name="Stavrides G."/>
            <person name="Almeida J.P."/>
            <person name="Babbage A.K."/>
            <person name="Bagguley C.L."/>
            <person name="Bailey J."/>
            <person name="Barlow K.F."/>
            <person name="Bates K.N."/>
            <person name="Beard L.M."/>
            <person name="Beare D.M."/>
            <person name="Beasley O.P."/>
            <person name="Bird C.P."/>
            <person name="Blakey S.E."/>
            <person name="Bridgeman A.M."/>
            <person name="Brown A.J."/>
            <person name="Buck D."/>
            <person name="Burrill W.D."/>
            <person name="Butler A.P."/>
            <person name="Carder C."/>
            <person name="Carter N.P."/>
            <person name="Chapman J.C."/>
            <person name="Clamp M."/>
            <person name="Clark G."/>
            <person name="Clark L.N."/>
            <person name="Clark S.Y."/>
            <person name="Clee C.M."/>
            <person name="Clegg S."/>
            <person name="Cobley V.E."/>
            <person name="Collier R.E."/>
            <person name="Connor R.E."/>
            <person name="Corby N.R."/>
            <person name="Coulson A."/>
            <person name="Coville G.J."/>
            <person name="Deadman R."/>
            <person name="Dhami P.D."/>
            <person name="Dunn M."/>
            <person name="Ellington A.G."/>
            <person name="Frankland J.A."/>
            <person name="Fraser A."/>
            <person name="French L."/>
            <person name="Garner P."/>
            <person name="Grafham D.V."/>
            <person name="Griffiths C."/>
            <person name="Griffiths M.N.D."/>
            <person name="Gwilliam R."/>
            <person name="Hall R.E."/>
            <person name="Hammond S."/>
            <person name="Harley J.L."/>
            <person name="Heath P.D."/>
            <person name="Ho S."/>
            <person name="Holden J.L."/>
            <person name="Howden P.J."/>
            <person name="Huckle E."/>
            <person name="Hunt A.R."/>
            <person name="Hunt S.E."/>
            <person name="Jekosch K."/>
            <person name="Johnson C.M."/>
            <person name="Johnson D."/>
            <person name="Kay M.P."/>
            <person name="Kimberley A.M."/>
            <person name="King A."/>
            <person name="Knights A."/>
            <person name="Laird G.K."/>
            <person name="Lawlor S."/>
            <person name="Lehvaeslaiho M.H."/>
            <person name="Leversha M.A."/>
            <person name="Lloyd C."/>
            <person name="Lloyd D.M."/>
            <person name="Lovell J.D."/>
            <person name="Marsh V.L."/>
            <person name="Martin S.L."/>
            <person name="McConnachie L.J."/>
            <person name="McLay K."/>
            <person name="McMurray A.A."/>
            <person name="Milne S.A."/>
            <person name="Mistry D."/>
            <person name="Moore M.J.F."/>
            <person name="Mullikin J.C."/>
            <person name="Nickerson T."/>
            <person name="Oliver K."/>
            <person name="Parker A."/>
            <person name="Patel R."/>
            <person name="Pearce T.A.V."/>
            <person name="Peck A.I."/>
            <person name="Phillimore B.J.C.T."/>
            <person name="Prathalingam S.R."/>
            <person name="Plumb R.W."/>
            <person name="Ramsay H."/>
            <person name="Rice C.M."/>
            <person name="Ross M.T."/>
            <person name="Scott C.E."/>
            <person name="Sehra H.K."/>
            <person name="Shownkeen R."/>
            <person name="Sims S."/>
            <person name="Skuce C.D."/>
            <person name="Smith M.L."/>
            <person name="Soderlund C."/>
            <person name="Steward C.A."/>
            <person name="Sulston J.E."/>
            <person name="Swann R.M."/>
            <person name="Sycamore N."/>
            <person name="Taylor R."/>
            <person name="Tee L."/>
            <person name="Thomas D.W."/>
            <person name="Thorpe A."/>
            <person name="Tracey A."/>
            <person name="Tromans A.C."/>
            <person name="Vaudin M."/>
            <person name="Wall M."/>
            <person name="Wallis J.M."/>
            <person name="Whitehead S.L."/>
            <person name="Whittaker P."/>
            <person name="Willey D.L."/>
            <person name="Williams L."/>
            <person name="Williams S.A."/>
            <person name="Wilming L."/>
            <person name="Wray P.W."/>
            <person name="Hubbard T."/>
            <person name="Durbin R.M."/>
            <person name="Bentley D.R."/>
            <person name="Beck S."/>
            <person name="Rogers J."/>
        </authorList>
    </citation>
    <scope>NUCLEOTIDE SEQUENCE [LARGE SCALE GENOMIC DNA]</scope>
</reference>
<reference key="3">
    <citation type="journal article" date="2004" name="Genome Res.">
        <title>The status, quality, and expansion of the NIH full-length cDNA project: the Mammalian Gene Collection (MGC).</title>
        <authorList>
            <consortium name="The MGC Project Team"/>
        </authorList>
    </citation>
    <scope>NUCLEOTIDE SEQUENCE [LARGE SCALE MRNA]</scope>
</reference>
<reference key="4">
    <citation type="journal article" date="2007" name="BMC Genomics">
        <title>The full-ORF clone resource of the German cDNA consortium.</title>
        <authorList>
            <person name="Bechtel S."/>
            <person name="Rosenfelder H."/>
            <person name="Duda A."/>
            <person name="Schmidt C.P."/>
            <person name="Ernst U."/>
            <person name="Wellenreuther R."/>
            <person name="Mehrle A."/>
            <person name="Schuster C."/>
            <person name="Bahr A."/>
            <person name="Bloecker H."/>
            <person name="Heubner D."/>
            <person name="Hoerlein A."/>
            <person name="Michel G."/>
            <person name="Wedler H."/>
            <person name="Koehrer K."/>
            <person name="Ottenwaelder B."/>
            <person name="Poustka A."/>
            <person name="Wiemann S."/>
            <person name="Schupp I."/>
        </authorList>
    </citation>
    <scope>NUCLEOTIDE SEQUENCE [LARGE SCALE MRNA] OF 279-797</scope>
    <source>
        <tissue>Kidney</tissue>
    </source>
</reference>
<reference key="5">
    <citation type="journal article" date="2020" name="Am. J. Hum. Genet.">
        <title>SYCP2 translocation-mediated dysregulation and frameshift variants cause human male infertility.</title>
        <authorList>
            <person name="Schilit S.L.P."/>
            <person name="Menon S."/>
            <person name="Friedrich C."/>
            <person name="Kammin T."/>
            <person name="Wilch E."/>
            <person name="Hanscom C."/>
            <person name="Jiang S."/>
            <person name="Kliesch S."/>
            <person name="Talkowski M.E."/>
            <person name="Tuettelmann F."/>
            <person name="MacQueen A.J."/>
            <person name="Morton C.C."/>
        </authorList>
    </citation>
    <scope>INVOLVEMENT IN SPGF1</scope>
</reference>
<gene>
    <name type="primary">SYCP2</name>
    <name type="synonym">SCP2</name>
</gene>
<dbReference type="EMBL" id="Y08982">
    <property type="protein sequence ID" value="CAA70171.1"/>
    <property type="molecule type" value="mRNA"/>
</dbReference>
<dbReference type="EMBL" id="AL109928">
    <property type="status" value="NOT_ANNOTATED_CDS"/>
    <property type="molecule type" value="Genomic_DNA"/>
</dbReference>
<dbReference type="EMBL" id="AL158092">
    <property type="status" value="NOT_ANNOTATED_CDS"/>
    <property type="molecule type" value="Genomic_DNA"/>
</dbReference>
<dbReference type="EMBL" id="BC132864">
    <property type="protein sequence ID" value="AAI32865.1"/>
    <property type="molecule type" value="mRNA"/>
</dbReference>
<dbReference type="EMBL" id="BC132870">
    <property type="protein sequence ID" value="AAI32871.1"/>
    <property type="molecule type" value="mRNA"/>
</dbReference>
<dbReference type="EMBL" id="AL080226">
    <property type="protein sequence ID" value="CAB45780.1"/>
    <property type="molecule type" value="mRNA"/>
</dbReference>
<dbReference type="CCDS" id="CCDS13482.1"/>
<dbReference type="RefSeq" id="NP_055073.2">
    <property type="nucleotide sequence ID" value="NM_014258.3"/>
</dbReference>
<dbReference type="RefSeq" id="XP_011526791.1">
    <property type="nucleotide sequence ID" value="XM_011528489.3"/>
</dbReference>
<dbReference type="RefSeq" id="XP_047295781.1">
    <property type="nucleotide sequence ID" value="XM_047439825.1"/>
</dbReference>
<dbReference type="RefSeq" id="XP_054178809.1">
    <property type="nucleotide sequence ID" value="XM_054322834.1"/>
</dbReference>
<dbReference type="RefSeq" id="XP_054178810.1">
    <property type="nucleotide sequence ID" value="XM_054322835.1"/>
</dbReference>
<dbReference type="SMR" id="Q9BX26"/>
<dbReference type="BioGRID" id="115660">
    <property type="interactions" value="5"/>
</dbReference>
<dbReference type="ComplexPortal" id="CPX-2461">
    <property type="entry name" value="Synaptonemal complex"/>
</dbReference>
<dbReference type="FunCoup" id="Q9BX26">
    <property type="interactions" value="703"/>
</dbReference>
<dbReference type="IntAct" id="Q9BX26">
    <property type="interactions" value="2"/>
</dbReference>
<dbReference type="MINT" id="Q9BX26"/>
<dbReference type="STRING" id="9606.ENSP00000350162"/>
<dbReference type="CarbonylDB" id="Q9BX26"/>
<dbReference type="GlyGen" id="Q9BX26">
    <property type="glycosylation" value="1 site, 1 O-linked glycan (1 site)"/>
</dbReference>
<dbReference type="iPTMnet" id="Q9BX26"/>
<dbReference type="PhosphoSitePlus" id="Q9BX26"/>
<dbReference type="BioMuta" id="SYCP2"/>
<dbReference type="DMDM" id="23822155"/>
<dbReference type="jPOST" id="Q9BX26"/>
<dbReference type="MassIVE" id="Q9BX26"/>
<dbReference type="PaxDb" id="9606-ENSP00000350162"/>
<dbReference type="PeptideAtlas" id="Q9BX26"/>
<dbReference type="ProteomicsDB" id="79343"/>
<dbReference type="Antibodypedia" id="58383">
    <property type="antibodies" value="86 antibodies from 17 providers"/>
</dbReference>
<dbReference type="DNASU" id="10388"/>
<dbReference type="Ensembl" id="ENST00000357552.8">
    <property type="protein sequence ID" value="ENSP00000350162.2"/>
    <property type="gene ID" value="ENSG00000196074.13"/>
</dbReference>
<dbReference type="Ensembl" id="ENST00000371001.6">
    <property type="protein sequence ID" value="ENSP00000360040.2"/>
    <property type="gene ID" value="ENSG00000196074.13"/>
</dbReference>
<dbReference type="GeneID" id="10388"/>
<dbReference type="KEGG" id="hsa:10388"/>
<dbReference type="MANE-Select" id="ENST00000357552.8">
    <property type="protein sequence ID" value="ENSP00000350162.2"/>
    <property type="RefSeq nucleotide sequence ID" value="NM_014258.4"/>
    <property type="RefSeq protein sequence ID" value="NP_055073.2"/>
</dbReference>
<dbReference type="UCSC" id="uc002yaz.4">
    <property type="organism name" value="human"/>
</dbReference>
<dbReference type="AGR" id="HGNC:11490"/>
<dbReference type="CTD" id="10388"/>
<dbReference type="DisGeNET" id="10388"/>
<dbReference type="GeneCards" id="SYCP2"/>
<dbReference type="HGNC" id="HGNC:11490">
    <property type="gene designation" value="SYCP2"/>
</dbReference>
<dbReference type="HPA" id="ENSG00000196074">
    <property type="expression patterns" value="Group enriched (breast, testis)"/>
</dbReference>
<dbReference type="MalaCards" id="SYCP2"/>
<dbReference type="MIM" id="258150">
    <property type="type" value="phenotype"/>
</dbReference>
<dbReference type="MIM" id="604105">
    <property type="type" value="gene"/>
</dbReference>
<dbReference type="neXtProt" id="NX_Q9BX26"/>
<dbReference type="OpenTargets" id="ENSG00000196074"/>
<dbReference type="PharmGKB" id="PA36272"/>
<dbReference type="VEuPathDB" id="HostDB:ENSG00000196074"/>
<dbReference type="eggNOG" id="ENOG502QVM5">
    <property type="taxonomic scope" value="Eukaryota"/>
</dbReference>
<dbReference type="GeneTree" id="ENSGT00530000063859"/>
<dbReference type="InParanoid" id="Q9BX26"/>
<dbReference type="OMA" id="QWETVII"/>
<dbReference type="OrthoDB" id="10256849at2759"/>
<dbReference type="PAN-GO" id="Q9BX26">
    <property type="GO annotations" value="4 GO annotations based on evolutionary models"/>
</dbReference>
<dbReference type="PhylomeDB" id="Q9BX26"/>
<dbReference type="TreeFam" id="TF332368"/>
<dbReference type="PathwayCommons" id="Q9BX26"/>
<dbReference type="Reactome" id="R-HSA-1221632">
    <property type="pathway name" value="Meiotic synapsis"/>
</dbReference>
<dbReference type="SignaLink" id="Q9BX26"/>
<dbReference type="SIGNOR" id="Q9BX26"/>
<dbReference type="BioGRID-ORCS" id="10388">
    <property type="hits" value="8 hits in 1144 CRISPR screens"/>
</dbReference>
<dbReference type="ChiTaRS" id="SYCP2">
    <property type="organism name" value="human"/>
</dbReference>
<dbReference type="GenomeRNAi" id="10388"/>
<dbReference type="Pharos" id="Q9BX26">
    <property type="development level" value="Tbio"/>
</dbReference>
<dbReference type="PRO" id="PR:Q9BX26"/>
<dbReference type="Proteomes" id="UP000005640">
    <property type="component" value="Chromosome 20"/>
</dbReference>
<dbReference type="RNAct" id="Q9BX26">
    <property type="molecule type" value="protein"/>
</dbReference>
<dbReference type="Bgee" id="ENSG00000196074">
    <property type="expression patterns" value="Expressed in right testis and 118 other cell types or tissues"/>
</dbReference>
<dbReference type="ExpressionAtlas" id="Q9BX26">
    <property type="expression patterns" value="baseline and differential"/>
</dbReference>
<dbReference type="GO" id="GO:0000779">
    <property type="term" value="C:condensed chromosome, centromeric region"/>
    <property type="evidence" value="ECO:0000318"/>
    <property type="project" value="GO_Central"/>
</dbReference>
<dbReference type="GO" id="GO:0000800">
    <property type="term" value="C:lateral element"/>
    <property type="evidence" value="ECO:0000250"/>
    <property type="project" value="UniProtKB"/>
</dbReference>
<dbReference type="GO" id="GO:0005634">
    <property type="term" value="C:nucleus"/>
    <property type="evidence" value="ECO:0000303"/>
    <property type="project" value="UniProtKB"/>
</dbReference>
<dbReference type="GO" id="GO:0000795">
    <property type="term" value="C:synaptonemal complex"/>
    <property type="evidence" value="ECO:0000303"/>
    <property type="project" value="UniProtKB"/>
</dbReference>
<dbReference type="GO" id="GO:0003677">
    <property type="term" value="F:DNA binding"/>
    <property type="evidence" value="ECO:0000303"/>
    <property type="project" value="UniProtKB"/>
</dbReference>
<dbReference type="GO" id="GO:0006915">
    <property type="term" value="P:apoptotic process"/>
    <property type="evidence" value="ECO:0007669"/>
    <property type="project" value="Ensembl"/>
</dbReference>
<dbReference type="GO" id="GO:0051301">
    <property type="term" value="P:cell division"/>
    <property type="evidence" value="ECO:0007669"/>
    <property type="project" value="UniProtKB-KW"/>
</dbReference>
<dbReference type="GO" id="GO:0035234">
    <property type="term" value="P:ectopic germ cell programmed cell death"/>
    <property type="evidence" value="ECO:0007669"/>
    <property type="project" value="Ensembl"/>
</dbReference>
<dbReference type="GO" id="GO:0007143">
    <property type="term" value="P:female meiotic nuclear division"/>
    <property type="evidence" value="ECO:0007669"/>
    <property type="project" value="Ensembl"/>
</dbReference>
<dbReference type="GO" id="GO:0009566">
    <property type="term" value="P:fertilization"/>
    <property type="evidence" value="ECO:0007669"/>
    <property type="project" value="Ensembl"/>
</dbReference>
<dbReference type="GO" id="GO:0048808">
    <property type="term" value="P:male genitalia morphogenesis"/>
    <property type="evidence" value="ECO:0007669"/>
    <property type="project" value="Ensembl"/>
</dbReference>
<dbReference type="GO" id="GO:0007140">
    <property type="term" value="P:male meiotic nuclear division"/>
    <property type="evidence" value="ECO:0007669"/>
    <property type="project" value="Ensembl"/>
</dbReference>
<dbReference type="GO" id="GO:0043066">
    <property type="term" value="P:negative regulation of apoptotic process"/>
    <property type="evidence" value="ECO:0007669"/>
    <property type="project" value="Ensembl"/>
</dbReference>
<dbReference type="GO" id="GO:0051093">
    <property type="term" value="P:negative regulation of developmental process"/>
    <property type="evidence" value="ECO:0007669"/>
    <property type="project" value="Ensembl"/>
</dbReference>
<dbReference type="GO" id="GO:2000242">
    <property type="term" value="P:negative regulation of reproductive process"/>
    <property type="evidence" value="ECO:0007669"/>
    <property type="project" value="Ensembl"/>
</dbReference>
<dbReference type="GO" id="GO:0007130">
    <property type="term" value="P:synaptonemal complex assembly"/>
    <property type="evidence" value="ECO:0000303"/>
    <property type="project" value="UniProtKB"/>
</dbReference>
<dbReference type="InterPro" id="IPR024835">
    <property type="entry name" value="SYCP2-like"/>
</dbReference>
<dbReference type="InterPro" id="IPR041322">
    <property type="entry name" value="SYCP2_ARLD"/>
</dbReference>
<dbReference type="InterPro" id="IPR040560">
    <property type="entry name" value="SYCP2_SLD"/>
</dbReference>
<dbReference type="PANTHER" id="PTHR15607:SF12">
    <property type="entry name" value="SYNAPTONEMAL COMPLEX PROTEIN 2"/>
    <property type="match status" value="1"/>
</dbReference>
<dbReference type="PANTHER" id="PTHR15607">
    <property type="entry name" value="SYNAPTONEMAL COMPLEX PROTEIN-RELATED"/>
    <property type="match status" value="1"/>
</dbReference>
<dbReference type="Pfam" id="PF18581">
    <property type="entry name" value="SYCP2_ARLD"/>
    <property type="match status" value="1"/>
</dbReference>
<dbReference type="Pfam" id="PF18584">
    <property type="entry name" value="SYCP2_SLD"/>
    <property type="match status" value="1"/>
</dbReference>
<accession>Q9BX26</accession>
<accession>A2RUE5</accession>
<accession>O75763</accession>
<accession>Q5JX11</accession>
<accession>Q9NTX8</accession>
<accession>Q9UG27</accession>
<keyword id="KW-0131">Cell cycle</keyword>
<keyword id="KW-0132">Cell division</keyword>
<keyword id="KW-0158">Chromosome</keyword>
<keyword id="KW-0238">DNA-binding</keyword>
<keyword id="KW-0469">Meiosis</keyword>
<keyword id="KW-0539">Nucleus</keyword>
<keyword id="KW-0597">Phosphoprotein</keyword>
<keyword id="KW-1267">Proteomics identification</keyword>
<keyword id="KW-1185">Reference proteome</keyword>
<evidence type="ECO:0000250" key="1">
    <source>
        <dbReference type="UniProtKB" id="O70608"/>
    </source>
</evidence>
<evidence type="ECO:0000250" key="2">
    <source>
        <dbReference type="UniProtKB" id="Q9CUU3"/>
    </source>
</evidence>
<evidence type="ECO:0000256" key="3">
    <source>
        <dbReference type="SAM" id="MobiDB-lite"/>
    </source>
</evidence>
<evidence type="ECO:0000269" key="4">
    <source>
    </source>
</evidence>
<evidence type="ECO:0000305" key="5"/>
<proteinExistence type="evidence at protein level"/>
<name>SYCP2_HUMAN</name>
<sequence length="1530" mass="175639">MPIRPDLQQLEKCIDDALRKNDFKPLKTLLQIDICEDVKIKCSKQFFHKVDNLICRELNKEDIHNVSAILVSVGRCGKNISVLGQAGLLTMIKQGLIQKMVAWFEKSKDIIQSQGNSKDEAVLNMIEDLVDLLLVIHDVSDEGKKQVVESFVPRICSLVIDSRVNICIQQEIIKKMNAMLDKMPQDARKILSNQEMLILMSSMGERILDAGDYDLQVGIVEALCRMTTEKQRQELAHQWFSMDFIAKAFKRIKDSEFETDCRIFLNLVNGMLGDKRRVFTFPCLSAFLDKYELQIPSDEKLEEFWIDFNLGSQTLSFYIAGDNDDHQWEAVTVPEEKVQIYSIEVRESKKLLTIILKNTVKISKREGKELLLYFDASLEITNVTQKIFGATKHRESIRKQGISVAKTSLHILFDASGSQILVPESQISPVGEELVSLKEKSKSPKEFAKPSKYIKNSDKGNRNNSQLEKTTPSKRKMSEASMIVSGADRYTMRSPVLFSNTSIPPRRRRIKPPLQMTSSAEKPSVSQTSENRVDNAASLKSRSSEGRHRRDNIDKHIKTAKCVENTENKNVEFPNQNFSELQDVIPDSQAAEKRDHTILPGVLDNICGNKIHSKWACWTPVTNIELCNNQRASTSSGDTLNQDIVINKKLTKQKSSSSISDHNSEGTGKVKYKKEQTDHIKIDKAEVEVCKKHNQQQNHPKYSGQKNTENAKQSDWPVESETTFKSVLLNKTIEESLIYRKKYILSKDVNTATCDKNPSASKNVQSHRKAEKELTSELNSWDSKQKKMREKSKGKEFTNVAESLISQINKRYKTKDDIKSTRKLKESLINSGFSNKPVVQLSKEKVQKKSYRKLKTTFVNVTSECPVNDVYNFNLNGADDPIIKLGIQEFQATAKEACADRSIRLVGPRNHDELKSSVKTKDKKIITNHQKKNLFSDTETEYRCDDSKTDISWLREPKSKPQLIDYSRNKNVKNHKSGKSRSSLEKGQPSSKMTPSKNITKKMDKTIPEGRIRLPRKATKTKKNYKDLSNSESECEQEFSHSFKENIPVKEENIHSRMKTVKLPKKQQKVFCAETEKELSKQWKNSSLLKDAIRDNCLDLSPRSLSGSPSSIEVTRCIEKITEKDFTQDYDCITKSISPYPKTSSLESLNSNSGVGGTIKSPKNNEKNFLCASESCSPIPRPLFLPRHTPTKSNTIVNRKKISSLVLTQETQNSNSYSDVSSYSSEERFMEIESPHINENYIQSKREESHLASSLSKSSEGREKTWFDMPCDATHVSGPTQHLSRKRIYIEDNLSNSNEVEMEEKGERRANLLPKKLCKIEDADHHIHKMSESVSSLSTNDFSIPWETWQNEFAGIEMTYETYERLNSEFKRRNNIRHKMLSYFTTQSWKTAQQHLRTMNHQSQDSRIKKLDKFQFIIIEELENFEKDSQSLKDLEKEFVDFWEKIFQKFSAYQKSEQQRLHLLKTSLAKSVFCNTDSEETVFTSEMCLMKEDMKVLQDRLLKDMLEEELLNVRRELMSVFMSHERNANV</sequence>
<organism>
    <name type="scientific">Homo sapiens</name>
    <name type="common">Human</name>
    <dbReference type="NCBI Taxonomy" id="9606"/>
    <lineage>
        <taxon>Eukaryota</taxon>
        <taxon>Metazoa</taxon>
        <taxon>Chordata</taxon>
        <taxon>Craniata</taxon>
        <taxon>Vertebrata</taxon>
        <taxon>Euteleostomi</taxon>
        <taxon>Mammalia</taxon>
        <taxon>Eutheria</taxon>
        <taxon>Euarchontoglires</taxon>
        <taxon>Primates</taxon>
        <taxon>Haplorrhini</taxon>
        <taxon>Catarrhini</taxon>
        <taxon>Hominidae</taxon>
        <taxon>Homo</taxon>
    </lineage>
</organism>
<protein>
    <recommendedName>
        <fullName>Synaptonemal complex protein 2</fullName>
        <shortName>SCP-2</shortName>
    </recommendedName>
    <alternativeName>
        <fullName>Synaptonemal complex lateral element protein</fullName>
        <shortName>hsSCP2</shortName>
    </alternativeName>
</protein>
<comment type="function">
    <text evidence="2">Major component of the axial/lateral elements of synaptonemal complexes (SCS) during meiotic prophase. Plays a role in the assembly of synaptonemal complexes. Required for normal meiotic chromosome synapsis during oocyte and spermatocyte development and for normal male and female fertility. Required for insertion of SYCP3 into synaptonemal complexes. May be involved in the organization of chromatin by temporarily binding to DNA scaffold attachment regions. Requires SYCP3, but not SYCP1, in order to be incorporated into the axial/lateral elements.</text>
</comment>
<comment type="subunit">
    <text evidence="1 2">Component of the lateral elements of synaptonemal complexes. Heterodimer with SYCP3 (By similarity). Interacts with SMC1A and SMC3 (By similarity). Interacts with TEX11 (By similarity).</text>
</comment>
<comment type="subcellular location">
    <subcellularLocation>
        <location evidence="2">Nucleus</location>
    </subcellularLocation>
    <subcellularLocation>
        <location evidence="2">Chromosome</location>
    </subcellularLocation>
    <text evidence="2">In axial/lateral elements of the tripartite segments of synaptonemal complexes.</text>
</comment>
<comment type="PTM">
    <text evidence="2">Phosphorylated.</text>
</comment>
<comment type="disease" evidence="4">
    <disease id="DI-05773">
        <name>Spermatogenic failure 1</name>
        <acronym>SPGF1</acronym>
        <description>An infertility disorder characterized by azoospermia due to spermatogenic arrest during meiosis. Meiotic arrest is characterized by germ cells that enter meiosis and undergo the first chromosomal reduction from 4n to 2n, but that are then unable to proceed further. This results in tubules containing spermatocytes as the latest developmental stage of germ cells. Meiotically arrested spermatocytes accumulate in the tubules and degenerate. Both autosomal recessive and autosomal dominant inheritance have been reported.</description>
        <dbReference type="MIM" id="258150"/>
    </disease>
    <text>The disease is caused by variants affecting the gene represented in this entry.</text>
</comment>
<comment type="similarity">
    <text evidence="5">Belongs to the SYCP2 family.</text>
</comment>